<protein>
    <recommendedName>
        <fullName evidence="1">Peptide chain release factor 3</fullName>
        <shortName evidence="1">RF-3</shortName>
    </recommendedName>
</protein>
<proteinExistence type="inferred from homology"/>
<name>RF3_HYDCU</name>
<evidence type="ECO:0000255" key="1">
    <source>
        <dbReference type="HAMAP-Rule" id="MF_00072"/>
    </source>
</evidence>
<dbReference type="EMBL" id="CP000109">
    <property type="protein sequence ID" value="ABB41565.1"/>
    <property type="molecule type" value="Genomic_DNA"/>
</dbReference>
<dbReference type="SMR" id="Q31H08"/>
<dbReference type="STRING" id="317025.Tcr_0970"/>
<dbReference type="KEGG" id="tcx:Tcr_0970"/>
<dbReference type="eggNOG" id="COG4108">
    <property type="taxonomic scope" value="Bacteria"/>
</dbReference>
<dbReference type="HOGENOM" id="CLU_002794_2_1_6"/>
<dbReference type="OrthoDB" id="5619066at2"/>
<dbReference type="GO" id="GO:0005829">
    <property type="term" value="C:cytosol"/>
    <property type="evidence" value="ECO:0007669"/>
    <property type="project" value="TreeGrafter"/>
</dbReference>
<dbReference type="GO" id="GO:0005525">
    <property type="term" value="F:GTP binding"/>
    <property type="evidence" value="ECO:0007669"/>
    <property type="project" value="UniProtKB-UniRule"/>
</dbReference>
<dbReference type="GO" id="GO:0003924">
    <property type="term" value="F:GTPase activity"/>
    <property type="evidence" value="ECO:0007669"/>
    <property type="project" value="InterPro"/>
</dbReference>
<dbReference type="GO" id="GO:0097216">
    <property type="term" value="F:guanosine tetraphosphate binding"/>
    <property type="evidence" value="ECO:0007669"/>
    <property type="project" value="UniProtKB-ARBA"/>
</dbReference>
<dbReference type="GO" id="GO:0016150">
    <property type="term" value="F:translation release factor activity, codon nonspecific"/>
    <property type="evidence" value="ECO:0007669"/>
    <property type="project" value="TreeGrafter"/>
</dbReference>
<dbReference type="GO" id="GO:0016149">
    <property type="term" value="F:translation release factor activity, codon specific"/>
    <property type="evidence" value="ECO:0007669"/>
    <property type="project" value="UniProtKB-UniRule"/>
</dbReference>
<dbReference type="GO" id="GO:0006449">
    <property type="term" value="P:regulation of translational termination"/>
    <property type="evidence" value="ECO:0007669"/>
    <property type="project" value="UniProtKB-UniRule"/>
</dbReference>
<dbReference type="CDD" id="cd04169">
    <property type="entry name" value="RF3"/>
    <property type="match status" value="1"/>
</dbReference>
<dbReference type="CDD" id="cd16259">
    <property type="entry name" value="RF3_III"/>
    <property type="match status" value="1"/>
</dbReference>
<dbReference type="FunFam" id="3.30.70.3280:FF:000001">
    <property type="entry name" value="Peptide chain release factor 3"/>
    <property type="match status" value="1"/>
</dbReference>
<dbReference type="FunFam" id="3.40.50.300:FF:000542">
    <property type="entry name" value="Peptide chain release factor 3"/>
    <property type="match status" value="1"/>
</dbReference>
<dbReference type="Gene3D" id="3.40.50.300">
    <property type="entry name" value="P-loop containing nucleotide triphosphate hydrolases"/>
    <property type="match status" value="2"/>
</dbReference>
<dbReference type="Gene3D" id="3.30.70.3280">
    <property type="entry name" value="Peptide chain release factor 3, domain III"/>
    <property type="match status" value="1"/>
</dbReference>
<dbReference type="HAMAP" id="MF_00072">
    <property type="entry name" value="Rel_fac_3"/>
    <property type="match status" value="1"/>
</dbReference>
<dbReference type="InterPro" id="IPR053905">
    <property type="entry name" value="EF-G-like_DII"/>
</dbReference>
<dbReference type="InterPro" id="IPR035647">
    <property type="entry name" value="EFG_III/V"/>
</dbReference>
<dbReference type="InterPro" id="IPR031157">
    <property type="entry name" value="G_TR_CS"/>
</dbReference>
<dbReference type="InterPro" id="IPR027417">
    <property type="entry name" value="P-loop_NTPase"/>
</dbReference>
<dbReference type="InterPro" id="IPR004548">
    <property type="entry name" value="PrfC"/>
</dbReference>
<dbReference type="InterPro" id="IPR032090">
    <property type="entry name" value="RF3_C"/>
</dbReference>
<dbReference type="InterPro" id="IPR038467">
    <property type="entry name" value="RF3_dom_3_sf"/>
</dbReference>
<dbReference type="InterPro" id="IPR041732">
    <property type="entry name" value="RF3_GTP-bd"/>
</dbReference>
<dbReference type="InterPro" id="IPR005225">
    <property type="entry name" value="Small_GTP-bd"/>
</dbReference>
<dbReference type="InterPro" id="IPR000795">
    <property type="entry name" value="T_Tr_GTP-bd_dom"/>
</dbReference>
<dbReference type="InterPro" id="IPR009000">
    <property type="entry name" value="Transl_B-barrel_sf"/>
</dbReference>
<dbReference type="NCBIfam" id="TIGR00503">
    <property type="entry name" value="prfC"/>
    <property type="match status" value="1"/>
</dbReference>
<dbReference type="NCBIfam" id="NF001964">
    <property type="entry name" value="PRK00741.1"/>
    <property type="match status" value="1"/>
</dbReference>
<dbReference type="NCBIfam" id="TIGR00231">
    <property type="entry name" value="small_GTP"/>
    <property type="match status" value="1"/>
</dbReference>
<dbReference type="PANTHER" id="PTHR43556">
    <property type="entry name" value="PEPTIDE CHAIN RELEASE FACTOR RF3"/>
    <property type="match status" value="1"/>
</dbReference>
<dbReference type="PANTHER" id="PTHR43556:SF2">
    <property type="entry name" value="PEPTIDE CHAIN RELEASE FACTOR RF3"/>
    <property type="match status" value="1"/>
</dbReference>
<dbReference type="Pfam" id="PF22042">
    <property type="entry name" value="EF-G_D2"/>
    <property type="match status" value="1"/>
</dbReference>
<dbReference type="Pfam" id="PF00009">
    <property type="entry name" value="GTP_EFTU"/>
    <property type="match status" value="1"/>
</dbReference>
<dbReference type="Pfam" id="PF16658">
    <property type="entry name" value="RF3_C"/>
    <property type="match status" value="1"/>
</dbReference>
<dbReference type="PRINTS" id="PR00315">
    <property type="entry name" value="ELONGATNFCT"/>
</dbReference>
<dbReference type="SUPFAM" id="SSF54980">
    <property type="entry name" value="EF-G C-terminal domain-like"/>
    <property type="match status" value="1"/>
</dbReference>
<dbReference type="SUPFAM" id="SSF52540">
    <property type="entry name" value="P-loop containing nucleoside triphosphate hydrolases"/>
    <property type="match status" value="1"/>
</dbReference>
<dbReference type="SUPFAM" id="SSF50447">
    <property type="entry name" value="Translation proteins"/>
    <property type="match status" value="1"/>
</dbReference>
<dbReference type="PROSITE" id="PS00301">
    <property type="entry name" value="G_TR_1"/>
    <property type="match status" value="1"/>
</dbReference>
<dbReference type="PROSITE" id="PS51722">
    <property type="entry name" value="G_TR_2"/>
    <property type="match status" value="1"/>
</dbReference>
<accession>Q31H08</accession>
<comment type="function">
    <text evidence="1">Increases the formation of ribosomal termination complexes and stimulates activities of RF-1 and RF-2. It binds guanine nucleotides and has strong preference for UGA stop codons. It may interact directly with the ribosome. The stimulation of RF-1 and RF-2 is significantly reduced by GTP and GDP, but not by GMP.</text>
</comment>
<comment type="subcellular location">
    <subcellularLocation>
        <location evidence="1">Cytoplasm</location>
    </subcellularLocation>
</comment>
<comment type="similarity">
    <text evidence="1">Belongs to the TRAFAC class translation factor GTPase superfamily. Classic translation factor GTPase family. PrfC subfamily.</text>
</comment>
<sequence>MSLQLETNKRRTFAIISHPDAGKTTVTEKLLLYGGAIQMAGAVKSRKTDRSATSDWMKMEQERGISVASSVMQFPYKDVMINLLDTPGHEDFSEDTYRTLTAVDSALMVIDVAKGVEDRTIKLMEVCRLRDTPILTFINKLDREGKEPIELLDEVEDVLKINCAPMTWPIGMGKRFKGIYHLYNDTVRLFESADGLNASEGELIHGLDNPELDQKLGSLAEELRDEIELVRGASHEFELDAFLKGTMTPVFFGSAVNNFGLQELLDGFAKYAPAPEGREASTRFVKSDEGKLTGFIFKIQANMDPKHRDRVAFMRIVSGKYEKGMSLKHVRIGKDVKIAKAITFLANKRDQAEVAYPGDIIGLHNHGTIKIGDTFTQGEDLKFTGIPNFAPELFRRAQLKDPMKMKALQKGLTQLSEEGATQLFRPIINNDLILGAVGILQFEVVAQRLKDEYNVTCLFEPVNVSTARWVIGDKAEIDKFLAKVKENVAYDAAGELVYIAPTRVNLTLIEERWPELQFVATREH</sequence>
<organism>
    <name type="scientific">Hydrogenovibrio crunogenus (strain DSM 25203 / XCL-2)</name>
    <name type="common">Thiomicrospira crunogena</name>
    <dbReference type="NCBI Taxonomy" id="317025"/>
    <lineage>
        <taxon>Bacteria</taxon>
        <taxon>Pseudomonadati</taxon>
        <taxon>Pseudomonadota</taxon>
        <taxon>Gammaproteobacteria</taxon>
        <taxon>Thiotrichales</taxon>
        <taxon>Piscirickettsiaceae</taxon>
        <taxon>Hydrogenovibrio</taxon>
    </lineage>
</organism>
<reference key="1">
    <citation type="journal article" date="2006" name="PLoS Biol.">
        <title>The genome of deep-sea vent chemolithoautotroph Thiomicrospira crunogena XCL-2.</title>
        <authorList>
            <person name="Scott K.M."/>
            <person name="Sievert S.M."/>
            <person name="Abril F.N."/>
            <person name="Ball L.A."/>
            <person name="Barrett C.J."/>
            <person name="Blake R.A."/>
            <person name="Boller A.J."/>
            <person name="Chain P.S.G."/>
            <person name="Clark J.A."/>
            <person name="Davis C.R."/>
            <person name="Detter C."/>
            <person name="Do K.F."/>
            <person name="Dobrinski K.P."/>
            <person name="Faza B.I."/>
            <person name="Fitzpatrick K.A."/>
            <person name="Freyermuth S.K."/>
            <person name="Harmer T.L."/>
            <person name="Hauser L.J."/>
            <person name="Huegler M."/>
            <person name="Kerfeld C.A."/>
            <person name="Klotz M.G."/>
            <person name="Kong W.W."/>
            <person name="Land M."/>
            <person name="Lapidus A."/>
            <person name="Larimer F.W."/>
            <person name="Longo D.L."/>
            <person name="Lucas S."/>
            <person name="Malfatti S.A."/>
            <person name="Massey S.E."/>
            <person name="Martin D.D."/>
            <person name="McCuddin Z."/>
            <person name="Meyer F."/>
            <person name="Moore J.L."/>
            <person name="Ocampo L.H. Jr."/>
            <person name="Paul J.H."/>
            <person name="Paulsen I.T."/>
            <person name="Reep D.K."/>
            <person name="Ren Q."/>
            <person name="Ross R.L."/>
            <person name="Sato P.Y."/>
            <person name="Thomas P."/>
            <person name="Tinkham L.E."/>
            <person name="Zeruth G.T."/>
        </authorList>
    </citation>
    <scope>NUCLEOTIDE SEQUENCE [LARGE SCALE GENOMIC DNA]</scope>
    <source>
        <strain>DSM 25203 / XCL-2</strain>
    </source>
</reference>
<keyword id="KW-0963">Cytoplasm</keyword>
<keyword id="KW-0342">GTP-binding</keyword>
<keyword id="KW-0547">Nucleotide-binding</keyword>
<keyword id="KW-0648">Protein biosynthesis</keyword>
<gene>
    <name evidence="1" type="primary">prfC</name>
    <name type="ordered locus">Tcr_0970</name>
</gene>
<feature type="chain" id="PRO_0000242224" description="Peptide chain release factor 3">
    <location>
        <begin position="1"/>
        <end position="524"/>
    </location>
</feature>
<feature type="domain" description="tr-type G">
    <location>
        <begin position="8"/>
        <end position="276"/>
    </location>
</feature>
<feature type="binding site" evidence="1">
    <location>
        <begin position="17"/>
        <end position="24"/>
    </location>
    <ligand>
        <name>GTP</name>
        <dbReference type="ChEBI" id="CHEBI:37565"/>
    </ligand>
</feature>
<feature type="binding site" evidence="1">
    <location>
        <begin position="85"/>
        <end position="89"/>
    </location>
    <ligand>
        <name>GTP</name>
        <dbReference type="ChEBI" id="CHEBI:37565"/>
    </ligand>
</feature>
<feature type="binding site" evidence="1">
    <location>
        <begin position="139"/>
        <end position="142"/>
    </location>
    <ligand>
        <name>GTP</name>
        <dbReference type="ChEBI" id="CHEBI:37565"/>
    </ligand>
</feature>